<keyword id="KW-0520">NAD</keyword>
<keyword id="KW-0808">Transferase</keyword>
<gene>
    <name evidence="1" type="primary">kptA</name>
    <name type="ordered locus">RL2607</name>
</gene>
<dbReference type="EC" id="2.7.1.-" evidence="1"/>
<dbReference type="EMBL" id="AM236080">
    <property type="protein sequence ID" value="CAK08095.1"/>
    <property type="molecule type" value="Genomic_DNA"/>
</dbReference>
<dbReference type="RefSeq" id="WP_011652154.1">
    <property type="nucleotide sequence ID" value="NC_008380.1"/>
</dbReference>
<dbReference type="SMR" id="Q1MG28"/>
<dbReference type="EnsemblBacteria" id="CAK08095">
    <property type="protein sequence ID" value="CAK08095"/>
    <property type="gene ID" value="RL2607"/>
</dbReference>
<dbReference type="KEGG" id="rle:RL2607"/>
<dbReference type="eggNOG" id="COG1859">
    <property type="taxonomic scope" value="Bacteria"/>
</dbReference>
<dbReference type="HOGENOM" id="CLU_052998_4_0_5"/>
<dbReference type="Proteomes" id="UP000006575">
    <property type="component" value="Chromosome"/>
</dbReference>
<dbReference type="GO" id="GO:0003950">
    <property type="term" value="F:NAD+ poly-ADP-ribosyltransferase activity"/>
    <property type="evidence" value="ECO:0007669"/>
    <property type="project" value="InterPro"/>
</dbReference>
<dbReference type="GO" id="GO:0000215">
    <property type="term" value="F:tRNA 2'-phosphotransferase activity"/>
    <property type="evidence" value="ECO:0007669"/>
    <property type="project" value="TreeGrafter"/>
</dbReference>
<dbReference type="GO" id="GO:0006388">
    <property type="term" value="P:tRNA splicing, via endonucleolytic cleavage and ligation"/>
    <property type="evidence" value="ECO:0007669"/>
    <property type="project" value="UniProtKB-UniRule"/>
</dbReference>
<dbReference type="Gene3D" id="3.20.170.30">
    <property type="match status" value="1"/>
</dbReference>
<dbReference type="Gene3D" id="1.10.10.970">
    <property type="entry name" value="RNA 2'-phosphotransferase, Tpt1/KptA family, N-terminal domain"/>
    <property type="match status" value="1"/>
</dbReference>
<dbReference type="HAMAP" id="MF_00299">
    <property type="entry name" value="KptA"/>
    <property type="match status" value="1"/>
</dbReference>
<dbReference type="InterPro" id="IPR002745">
    <property type="entry name" value="Ptrans_KptA/Tpt1"/>
</dbReference>
<dbReference type="InterPro" id="IPR042081">
    <property type="entry name" value="RNA_2'-PTrans_C"/>
</dbReference>
<dbReference type="InterPro" id="IPR022928">
    <property type="entry name" value="RNA_2'-PTrans_KptA"/>
</dbReference>
<dbReference type="InterPro" id="IPR042080">
    <property type="entry name" value="RNA_2'-PTrans_N"/>
</dbReference>
<dbReference type="NCBIfam" id="NF002013">
    <property type="entry name" value="PRK00819.1-2"/>
    <property type="match status" value="1"/>
</dbReference>
<dbReference type="PANTHER" id="PTHR12684">
    <property type="entry name" value="PUTATIVE PHOSPHOTRANSFERASE"/>
    <property type="match status" value="1"/>
</dbReference>
<dbReference type="PANTHER" id="PTHR12684:SF2">
    <property type="entry name" value="TRNA 2'-PHOSPHOTRANSFERASE 1"/>
    <property type="match status" value="1"/>
</dbReference>
<dbReference type="Pfam" id="PF01885">
    <property type="entry name" value="PTS_2-RNA"/>
    <property type="match status" value="1"/>
</dbReference>
<dbReference type="SUPFAM" id="SSF56399">
    <property type="entry name" value="ADP-ribosylation"/>
    <property type="match status" value="1"/>
</dbReference>
<comment type="function">
    <text evidence="1">Removes the 2'-phosphate from RNA via an intermediate in which the phosphate is ADP-ribosylated by NAD followed by a presumed transesterification to release the RNA and generate ADP-ribose 1''-2''-cyclic phosphate (APPR&gt;P). May function as an ADP-ribosylase.</text>
</comment>
<comment type="similarity">
    <text evidence="1">Belongs to the KptA/TPT1 family.</text>
</comment>
<proteinExistence type="inferred from homology"/>
<reference key="1">
    <citation type="journal article" date="2006" name="Genome Biol.">
        <title>The genome of Rhizobium leguminosarum has recognizable core and accessory components.</title>
        <authorList>
            <person name="Young J.P.W."/>
            <person name="Crossman L.C."/>
            <person name="Johnston A.W.B."/>
            <person name="Thomson N.R."/>
            <person name="Ghazoui Z.F."/>
            <person name="Hull K.H."/>
            <person name="Wexler M."/>
            <person name="Curson A.R.J."/>
            <person name="Todd J.D."/>
            <person name="Poole P.S."/>
            <person name="Mauchline T.H."/>
            <person name="East A.K."/>
            <person name="Quail M.A."/>
            <person name="Churcher C."/>
            <person name="Arrowsmith C."/>
            <person name="Cherevach I."/>
            <person name="Chillingworth T."/>
            <person name="Clarke K."/>
            <person name="Cronin A."/>
            <person name="Davis P."/>
            <person name="Fraser A."/>
            <person name="Hance Z."/>
            <person name="Hauser H."/>
            <person name="Jagels K."/>
            <person name="Moule S."/>
            <person name="Mungall K."/>
            <person name="Norbertczak H."/>
            <person name="Rabbinowitsch E."/>
            <person name="Sanders M."/>
            <person name="Simmonds M."/>
            <person name="Whitehead S."/>
            <person name="Parkhill J."/>
        </authorList>
    </citation>
    <scope>NUCLEOTIDE SEQUENCE [LARGE SCALE GENOMIC DNA]</scope>
    <source>
        <strain>DSM 114642 / LMG 32736 / 3841</strain>
    </source>
</reference>
<evidence type="ECO:0000255" key="1">
    <source>
        <dbReference type="HAMAP-Rule" id="MF_00299"/>
    </source>
</evidence>
<name>KPTA_RHIJ3</name>
<sequence length="184" mass="20588">MMKARLETEVSKYMSYVLRHAPDAAGLTLDSGGWVSFDELEKALASKYDVSRAEIIEIVENNPKKRFTLAHNRIRANQGHSVDIDLALNQAEPPAALFHGTSLTNWQSIEREGLKKMQRHHVHLSADVETAKIVAARRKGEHIILRVDAARMFSEGHSFFVSDNGVWLAESVPVQYLSRNAGTP</sequence>
<accession>Q1MG28</accession>
<organism>
    <name type="scientific">Rhizobium johnstonii (strain DSM 114642 / LMG 32736 / 3841)</name>
    <name type="common">Rhizobium leguminosarum bv. viciae</name>
    <dbReference type="NCBI Taxonomy" id="216596"/>
    <lineage>
        <taxon>Bacteria</taxon>
        <taxon>Pseudomonadati</taxon>
        <taxon>Pseudomonadota</taxon>
        <taxon>Alphaproteobacteria</taxon>
        <taxon>Hyphomicrobiales</taxon>
        <taxon>Rhizobiaceae</taxon>
        <taxon>Rhizobium/Agrobacterium group</taxon>
        <taxon>Rhizobium</taxon>
        <taxon>Rhizobium johnstonii</taxon>
    </lineage>
</organism>
<feature type="chain" id="PRO_1000022019" description="Probable RNA 2'-phosphotransferase">
    <location>
        <begin position="1"/>
        <end position="184"/>
    </location>
</feature>
<protein>
    <recommendedName>
        <fullName evidence="1">Probable RNA 2'-phosphotransferase</fullName>
        <ecNumber evidence="1">2.7.1.-</ecNumber>
    </recommendedName>
</protein>